<protein>
    <recommendedName>
        <fullName evidence="1">Thiopurine S-methyltransferase</fullName>
        <ecNumber evidence="1">2.1.1.67</ecNumber>
    </recommendedName>
    <alternativeName>
        <fullName evidence="1">Thiopurine methyltransferase</fullName>
    </alternativeName>
</protein>
<sequence>MNPEFWQARWKEKRIGFNQPKVNPLLIKYFSDLKMATGSRIFIPLCGKSIDMIWLANQGFDMVGVELVESAVQEFFAENNISYTIKAHDKNSNIKCYQGQLSGQTIALWVADIFMLRTNDVGRVDAVYDRAALIAMPAELRPQYSQQVIDLSQNAHQLLLTLNYDQNERAGPPFSISHEQIQQYYSAHYQIQELEGKPSTLNAAPEMTVTENVWLLNKP</sequence>
<name>TPMT_PSYCK</name>
<comment type="catalytic activity">
    <reaction evidence="1">
        <text>S-adenosyl-L-methionine + a thiopurine = S-adenosyl-L-homocysteine + a thiopurine S-methylether.</text>
        <dbReference type="EC" id="2.1.1.67"/>
    </reaction>
</comment>
<comment type="subcellular location">
    <subcellularLocation>
        <location evidence="1">Cytoplasm</location>
    </subcellularLocation>
</comment>
<comment type="similarity">
    <text evidence="1">Belongs to the class I-like SAM-binding methyltransferase superfamily. TPMT family.</text>
</comment>
<gene>
    <name evidence="1" type="primary">tpm</name>
    <name type="ordered locus">Pcryo_2244</name>
</gene>
<organism>
    <name type="scientific">Psychrobacter cryohalolentis (strain ATCC BAA-1226 / DSM 17306 / VKM B-2378 / K5)</name>
    <dbReference type="NCBI Taxonomy" id="335284"/>
    <lineage>
        <taxon>Bacteria</taxon>
        <taxon>Pseudomonadati</taxon>
        <taxon>Pseudomonadota</taxon>
        <taxon>Gammaproteobacteria</taxon>
        <taxon>Moraxellales</taxon>
        <taxon>Moraxellaceae</taxon>
        <taxon>Psychrobacter</taxon>
    </lineage>
</organism>
<feature type="chain" id="PRO_1000134079" description="Thiopurine S-methyltransferase">
    <location>
        <begin position="1"/>
        <end position="219"/>
    </location>
</feature>
<feature type="binding site" evidence="1">
    <location>
        <position position="10"/>
    </location>
    <ligand>
        <name>S-adenosyl-L-methionine</name>
        <dbReference type="ChEBI" id="CHEBI:59789"/>
    </ligand>
</feature>
<feature type="binding site" evidence="1">
    <location>
        <position position="45"/>
    </location>
    <ligand>
        <name>S-adenosyl-L-methionine</name>
        <dbReference type="ChEBI" id="CHEBI:59789"/>
    </ligand>
</feature>
<feature type="binding site" evidence="1">
    <location>
        <position position="66"/>
    </location>
    <ligand>
        <name>S-adenosyl-L-methionine</name>
        <dbReference type="ChEBI" id="CHEBI:59789"/>
    </ligand>
</feature>
<feature type="binding site" evidence="1">
    <location>
        <position position="130"/>
    </location>
    <ligand>
        <name>S-adenosyl-L-methionine</name>
        <dbReference type="ChEBI" id="CHEBI:59789"/>
    </ligand>
</feature>
<accession>Q1Q8I2</accession>
<reference key="1">
    <citation type="submission" date="2006-03" db="EMBL/GenBank/DDBJ databases">
        <title>Complete sequence of chromosome of Psychrobacter cryohalolentis K5.</title>
        <authorList>
            <consortium name="US DOE Joint Genome Institute"/>
            <person name="Copeland A."/>
            <person name="Lucas S."/>
            <person name="Lapidus A."/>
            <person name="Barry K."/>
            <person name="Detter J.C."/>
            <person name="Glavina T."/>
            <person name="Hammon N."/>
            <person name="Israni S."/>
            <person name="Dalin E."/>
            <person name="Tice H."/>
            <person name="Pitluck S."/>
            <person name="Brettin T."/>
            <person name="Bruce D."/>
            <person name="Han C."/>
            <person name="Tapia R."/>
            <person name="Sims D.R."/>
            <person name="Gilna P."/>
            <person name="Schmutz J."/>
            <person name="Larimer F."/>
            <person name="Land M."/>
            <person name="Hauser L."/>
            <person name="Kyrpides N."/>
            <person name="Kim E."/>
            <person name="Richardson P."/>
        </authorList>
    </citation>
    <scope>NUCLEOTIDE SEQUENCE [LARGE SCALE GENOMIC DNA]</scope>
    <source>
        <strain>ATCC BAA-1226 / DSM 17306 / VKM B-2378 / K5</strain>
    </source>
</reference>
<keyword id="KW-0963">Cytoplasm</keyword>
<keyword id="KW-0489">Methyltransferase</keyword>
<keyword id="KW-0949">S-adenosyl-L-methionine</keyword>
<keyword id="KW-0808">Transferase</keyword>
<dbReference type="EC" id="2.1.1.67" evidence="1"/>
<dbReference type="EMBL" id="CP000323">
    <property type="protein sequence ID" value="ABE76021.1"/>
    <property type="molecule type" value="Genomic_DNA"/>
</dbReference>
<dbReference type="SMR" id="Q1Q8I2"/>
<dbReference type="STRING" id="335284.Pcryo_2244"/>
<dbReference type="KEGG" id="pcr:Pcryo_2244"/>
<dbReference type="eggNOG" id="COG0500">
    <property type="taxonomic scope" value="Bacteria"/>
</dbReference>
<dbReference type="HOGENOM" id="CLU_085515_1_0_6"/>
<dbReference type="Proteomes" id="UP000002425">
    <property type="component" value="Chromosome"/>
</dbReference>
<dbReference type="GO" id="GO:0005737">
    <property type="term" value="C:cytoplasm"/>
    <property type="evidence" value="ECO:0007669"/>
    <property type="project" value="UniProtKB-SubCell"/>
</dbReference>
<dbReference type="GO" id="GO:0008119">
    <property type="term" value="F:thiopurine S-methyltransferase activity"/>
    <property type="evidence" value="ECO:0007669"/>
    <property type="project" value="UniProtKB-UniRule"/>
</dbReference>
<dbReference type="GO" id="GO:0032259">
    <property type="term" value="P:methylation"/>
    <property type="evidence" value="ECO:0007669"/>
    <property type="project" value="UniProtKB-KW"/>
</dbReference>
<dbReference type="GO" id="GO:0010038">
    <property type="term" value="P:response to metal ion"/>
    <property type="evidence" value="ECO:0007669"/>
    <property type="project" value="InterPro"/>
</dbReference>
<dbReference type="FunFam" id="3.40.50.150:FF:000101">
    <property type="entry name" value="Thiopurine S-methyltransferase"/>
    <property type="match status" value="1"/>
</dbReference>
<dbReference type="Gene3D" id="3.40.50.150">
    <property type="entry name" value="Vaccinia Virus protein VP39"/>
    <property type="match status" value="1"/>
</dbReference>
<dbReference type="HAMAP" id="MF_00812">
    <property type="entry name" value="Thiopur_methtran"/>
    <property type="match status" value="1"/>
</dbReference>
<dbReference type="InterPro" id="IPR029063">
    <property type="entry name" value="SAM-dependent_MTases_sf"/>
</dbReference>
<dbReference type="InterPro" id="IPR022474">
    <property type="entry name" value="Thiopur_S-MeTfrase_Se/Te_detox"/>
</dbReference>
<dbReference type="InterPro" id="IPR025835">
    <property type="entry name" value="Thiopurine_S-MeTrfase"/>
</dbReference>
<dbReference type="InterPro" id="IPR008854">
    <property type="entry name" value="TPMT"/>
</dbReference>
<dbReference type="NCBIfam" id="NF009732">
    <property type="entry name" value="PRK13255.1"/>
    <property type="match status" value="1"/>
</dbReference>
<dbReference type="NCBIfam" id="TIGR03840">
    <property type="entry name" value="TMPT_Se_Te"/>
    <property type="match status" value="1"/>
</dbReference>
<dbReference type="PANTHER" id="PTHR10259">
    <property type="entry name" value="THIOPURINE S-METHYLTRANSFERASE"/>
    <property type="match status" value="1"/>
</dbReference>
<dbReference type="PANTHER" id="PTHR10259:SF11">
    <property type="entry name" value="THIOPURINE S-METHYLTRANSFERASE"/>
    <property type="match status" value="1"/>
</dbReference>
<dbReference type="Pfam" id="PF05724">
    <property type="entry name" value="TPMT"/>
    <property type="match status" value="1"/>
</dbReference>
<dbReference type="PIRSF" id="PIRSF023956">
    <property type="entry name" value="Thiopurine_S-methyltransferase"/>
    <property type="match status" value="1"/>
</dbReference>
<dbReference type="SUPFAM" id="SSF53335">
    <property type="entry name" value="S-adenosyl-L-methionine-dependent methyltransferases"/>
    <property type="match status" value="1"/>
</dbReference>
<dbReference type="PROSITE" id="PS51585">
    <property type="entry name" value="SAM_MT_TPMT"/>
    <property type="match status" value="1"/>
</dbReference>
<evidence type="ECO:0000255" key="1">
    <source>
        <dbReference type="HAMAP-Rule" id="MF_00812"/>
    </source>
</evidence>
<proteinExistence type="inferred from homology"/>